<protein>
    <recommendedName>
        <fullName evidence="1">Small ribosomal subunit protein uS9</fullName>
    </recommendedName>
    <alternativeName>
        <fullName evidence="2">30S ribosomal protein S9</fullName>
    </alternativeName>
</protein>
<sequence>MAITQNYGTGRRKSSTARVFLRKGSGNITVNGRPLDEFFGRETARMIVRQPLELTKNTESFDILVTAAGGGTTGQAGAIRLGIARALVEYDETLKSELRKAGFMTRDAREVERKKVGLHKARRATQFSKR</sequence>
<reference key="1">
    <citation type="submission" date="2008-06" db="EMBL/GenBank/DDBJ databases">
        <title>Complete sequence of Stenotrophomonas maltophilia R551-3.</title>
        <authorList>
            <consortium name="US DOE Joint Genome Institute"/>
            <person name="Lucas S."/>
            <person name="Copeland A."/>
            <person name="Lapidus A."/>
            <person name="Glavina del Rio T."/>
            <person name="Dalin E."/>
            <person name="Tice H."/>
            <person name="Pitluck S."/>
            <person name="Chain P."/>
            <person name="Malfatti S."/>
            <person name="Shin M."/>
            <person name="Vergez L."/>
            <person name="Lang D."/>
            <person name="Schmutz J."/>
            <person name="Larimer F."/>
            <person name="Land M."/>
            <person name="Hauser L."/>
            <person name="Kyrpides N."/>
            <person name="Mikhailova N."/>
            <person name="Taghavi S."/>
            <person name="Monchy S."/>
            <person name="Newman L."/>
            <person name="Vangronsveld J."/>
            <person name="van der Lelie D."/>
            <person name="Richardson P."/>
        </authorList>
    </citation>
    <scope>NUCLEOTIDE SEQUENCE [LARGE SCALE GENOMIC DNA]</scope>
    <source>
        <strain>R551-3</strain>
    </source>
</reference>
<keyword id="KW-0687">Ribonucleoprotein</keyword>
<keyword id="KW-0689">Ribosomal protein</keyword>
<name>RS9_STRM5</name>
<accession>B4SLE0</accession>
<organism>
    <name type="scientific">Stenotrophomonas maltophilia (strain R551-3)</name>
    <dbReference type="NCBI Taxonomy" id="391008"/>
    <lineage>
        <taxon>Bacteria</taxon>
        <taxon>Pseudomonadati</taxon>
        <taxon>Pseudomonadota</taxon>
        <taxon>Gammaproteobacteria</taxon>
        <taxon>Lysobacterales</taxon>
        <taxon>Lysobacteraceae</taxon>
        <taxon>Stenotrophomonas</taxon>
        <taxon>Stenotrophomonas maltophilia group</taxon>
    </lineage>
</organism>
<dbReference type="EMBL" id="CP001111">
    <property type="protein sequence ID" value="ACF53409.1"/>
    <property type="molecule type" value="Genomic_DNA"/>
</dbReference>
<dbReference type="RefSeq" id="WP_005411311.1">
    <property type="nucleotide sequence ID" value="NC_011071.1"/>
</dbReference>
<dbReference type="SMR" id="B4SLE0"/>
<dbReference type="STRING" id="391008.Smal_3710"/>
<dbReference type="GeneID" id="97262945"/>
<dbReference type="KEGG" id="smt:Smal_3710"/>
<dbReference type="eggNOG" id="COG0103">
    <property type="taxonomic scope" value="Bacteria"/>
</dbReference>
<dbReference type="HOGENOM" id="CLU_046483_2_1_6"/>
<dbReference type="OrthoDB" id="9803965at2"/>
<dbReference type="Proteomes" id="UP000001867">
    <property type="component" value="Chromosome"/>
</dbReference>
<dbReference type="GO" id="GO:0022627">
    <property type="term" value="C:cytosolic small ribosomal subunit"/>
    <property type="evidence" value="ECO:0007669"/>
    <property type="project" value="TreeGrafter"/>
</dbReference>
<dbReference type="GO" id="GO:0003723">
    <property type="term" value="F:RNA binding"/>
    <property type="evidence" value="ECO:0007669"/>
    <property type="project" value="TreeGrafter"/>
</dbReference>
<dbReference type="GO" id="GO:0003735">
    <property type="term" value="F:structural constituent of ribosome"/>
    <property type="evidence" value="ECO:0007669"/>
    <property type="project" value="InterPro"/>
</dbReference>
<dbReference type="GO" id="GO:0006412">
    <property type="term" value="P:translation"/>
    <property type="evidence" value="ECO:0007669"/>
    <property type="project" value="UniProtKB-UniRule"/>
</dbReference>
<dbReference type="FunFam" id="3.30.230.10:FF:000001">
    <property type="entry name" value="30S ribosomal protein S9"/>
    <property type="match status" value="1"/>
</dbReference>
<dbReference type="Gene3D" id="3.30.230.10">
    <property type="match status" value="1"/>
</dbReference>
<dbReference type="HAMAP" id="MF_00532_B">
    <property type="entry name" value="Ribosomal_uS9_B"/>
    <property type="match status" value="1"/>
</dbReference>
<dbReference type="InterPro" id="IPR020568">
    <property type="entry name" value="Ribosomal_Su5_D2-typ_SF"/>
</dbReference>
<dbReference type="InterPro" id="IPR000754">
    <property type="entry name" value="Ribosomal_uS9"/>
</dbReference>
<dbReference type="InterPro" id="IPR023035">
    <property type="entry name" value="Ribosomal_uS9_bac/plastid"/>
</dbReference>
<dbReference type="InterPro" id="IPR020574">
    <property type="entry name" value="Ribosomal_uS9_CS"/>
</dbReference>
<dbReference type="InterPro" id="IPR014721">
    <property type="entry name" value="Ribsml_uS5_D2-typ_fold_subgr"/>
</dbReference>
<dbReference type="NCBIfam" id="NF001099">
    <property type="entry name" value="PRK00132.1"/>
    <property type="match status" value="1"/>
</dbReference>
<dbReference type="PANTHER" id="PTHR21569">
    <property type="entry name" value="RIBOSOMAL PROTEIN S9"/>
    <property type="match status" value="1"/>
</dbReference>
<dbReference type="PANTHER" id="PTHR21569:SF1">
    <property type="entry name" value="SMALL RIBOSOMAL SUBUNIT PROTEIN US9M"/>
    <property type="match status" value="1"/>
</dbReference>
<dbReference type="Pfam" id="PF00380">
    <property type="entry name" value="Ribosomal_S9"/>
    <property type="match status" value="1"/>
</dbReference>
<dbReference type="SUPFAM" id="SSF54211">
    <property type="entry name" value="Ribosomal protein S5 domain 2-like"/>
    <property type="match status" value="1"/>
</dbReference>
<dbReference type="PROSITE" id="PS00360">
    <property type="entry name" value="RIBOSOMAL_S9"/>
    <property type="match status" value="1"/>
</dbReference>
<proteinExistence type="inferred from homology"/>
<evidence type="ECO:0000255" key="1">
    <source>
        <dbReference type="HAMAP-Rule" id="MF_00532"/>
    </source>
</evidence>
<evidence type="ECO:0000305" key="2"/>
<gene>
    <name evidence="1" type="primary">rpsI</name>
    <name type="ordered locus">Smal_3710</name>
</gene>
<feature type="chain" id="PRO_1000128179" description="Small ribosomal subunit protein uS9">
    <location>
        <begin position="1"/>
        <end position="130"/>
    </location>
</feature>
<comment type="similarity">
    <text evidence="1">Belongs to the universal ribosomal protein uS9 family.</text>
</comment>